<protein>
    <recommendedName>
        <fullName>Gamma-crystallin B</fullName>
    </recommendedName>
    <alternativeName>
        <fullName>Gamma-B-crystallin</fullName>
    </alternativeName>
    <alternativeName>
        <fullName>Gamma-crystallin 1-2</fullName>
    </alternativeName>
</protein>
<sequence>MGKITFYEDRAFQGRSYECTTDCPNLQPYFSRCNSIRVESGCWMIYERPNYQGHQYFLRRGEYPDYQQWMGLSDSIRSCCLIPPHSGAYRMKIYDRDELRGQMSELTDDCISVQDRFHLTEIHSLNVLEGSWILYEMPNYRGRQYLLRPGEYRRFLDWGAPNAKVGSLRRVMDLY</sequence>
<dbReference type="EMBL" id="M11971">
    <property type="protein sequence ID" value="AAA52113.1"/>
    <property type="molecule type" value="Genomic_DNA"/>
</dbReference>
<dbReference type="EMBL" id="M11970">
    <property type="protein sequence ID" value="AAA52113.1"/>
    <property type="status" value="JOINED"/>
    <property type="molecule type" value="Genomic_DNA"/>
</dbReference>
<dbReference type="EMBL" id="M19364">
    <property type="protein sequence ID" value="AAA52109.1"/>
    <property type="molecule type" value="Genomic_DNA"/>
</dbReference>
<dbReference type="EMBL" id="AC016697">
    <property type="protein sequence ID" value="AAX93219.1"/>
    <property type="molecule type" value="Genomic_DNA"/>
</dbReference>
<dbReference type="EMBL" id="BC074944">
    <property type="protein sequence ID" value="AAH74944.1"/>
    <property type="molecule type" value="mRNA"/>
</dbReference>
<dbReference type="EMBL" id="BC074945">
    <property type="protein sequence ID" value="AAH74945.1"/>
    <property type="molecule type" value="mRNA"/>
</dbReference>
<dbReference type="EMBL" id="BC117384">
    <property type="protein sequence ID" value="AAI17385.1"/>
    <property type="molecule type" value="mRNA"/>
</dbReference>
<dbReference type="EMBL" id="BC117388">
    <property type="protein sequence ID" value="AAI17389.1"/>
    <property type="molecule type" value="mRNA"/>
</dbReference>
<dbReference type="CCDS" id="CCDS2380.1"/>
<dbReference type="PIR" id="A24520">
    <property type="entry name" value="CYHUG1"/>
</dbReference>
<dbReference type="RefSeq" id="NP_005201.2">
    <property type="nucleotide sequence ID" value="NM_005210.4"/>
</dbReference>
<dbReference type="PDB" id="2JDF">
    <property type="method" value="X-ray"/>
    <property type="resolution" value="1.70 A"/>
    <property type="chains" value="A=2-175"/>
</dbReference>
<dbReference type="PDB" id="2JDG">
    <property type="method" value="X-ray"/>
    <property type="resolution" value="2.00 A"/>
    <property type="chains" value="A=2-175"/>
</dbReference>
<dbReference type="PDBsum" id="2JDF"/>
<dbReference type="PDBsum" id="2JDG"/>
<dbReference type="SMR" id="P07316"/>
<dbReference type="BioGRID" id="107809">
    <property type="interactions" value="5"/>
</dbReference>
<dbReference type="FunCoup" id="P07316">
    <property type="interactions" value="4"/>
</dbReference>
<dbReference type="IntAct" id="P07316">
    <property type="interactions" value="2"/>
</dbReference>
<dbReference type="STRING" id="9606.ENSP00000260988"/>
<dbReference type="iPTMnet" id="P07316"/>
<dbReference type="PhosphoSitePlus" id="P07316"/>
<dbReference type="BioMuta" id="CRYGB"/>
<dbReference type="DMDM" id="311033463"/>
<dbReference type="MassIVE" id="P07316"/>
<dbReference type="PaxDb" id="9606-ENSP00000260988"/>
<dbReference type="PeptideAtlas" id="P07316"/>
<dbReference type="ProteomicsDB" id="51986"/>
<dbReference type="Antibodypedia" id="34195">
    <property type="antibodies" value="61 antibodies from 16 providers"/>
</dbReference>
<dbReference type="DNASU" id="1419"/>
<dbReference type="Ensembl" id="ENST00000260988.5">
    <property type="protein sequence ID" value="ENSP00000260988.4"/>
    <property type="gene ID" value="ENSG00000182187.4"/>
</dbReference>
<dbReference type="GeneID" id="1419"/>
<dbReference type="KEGG" id="hsa:1419"/>
<dbReference type="MANE-Select" id="ENST00000260988.5">
    <property type="protein sequence ID" value="ENSP00000260988.4"/>
    <property type="RefSeq nucleotide sequence ID" value="NM_005210.4"/>
    <property type="RefSeq protein sequence ID" value="NP_005201.2"/>
</dbReference>
<dbReference type="UCSC" id="uc002vcp.5">
    <property type="organism name" value="human"/>
</dbReference>
<dbReference type="AGR" id="HGNC:2409"/>
<dbReference type="CTD" id="1419"/>
<dbReference type="DisGeNET" id="1419"/>
<dbReference type="GeneCards" id="CRYGB"/>
<dbReference type="HGNC" id="HGNC:2409">
    <property type="gene designation" value="CRYGB"/>
</dbReference>
<dbReference type="HPA" id="ENSG00000182187">
    <property type="expression patterns" value="Not detected"/>
</dbReference>
<dbReference type="MalaCards" id="CRYGB"/>
<dbReference type="MIM" id="123670">
    <property type="type" value="gene"/>
</dbReference>
<dbReference type="MIM" id="615188">
    <property type="type" value="phenotype"/>
</dbReference>
<dbReference type="neXtProt" id="NX_P07316"/>
<dbReference type="OpenTargets" id="ENSG00000182187"/>
<dbReference type="Orphanet" id="98988">
    <property type="disease" value="Early-onset anterior polar cataract"/>
</dbReference>
<dbReference type="Orphanet" id="441452">
    <property type="disease" value="Early-onset lamellar cataract"/>
</dbReference>
<dbReference type="Orphanet" id="98994">
    <property type="disease" value="Total early-onset cataract"/>
</dbReference>
<dbReference type="PharmGKB" id="PA26916"/>
<dbReference type="VEuPathDB" id="HostDB:ENSG00000182187"/>
<dbReference type="eggNOG" id="ENOG502RXJY">
    <property type="taxonomic scope" value="Eukaryota"/>
</dbReference>
<dbReference type="GeneTree" id="ENSGT00940000159232"/>
<dbReference type="HOGENOM" id="CLU_081883_1_1_1"/>
<dbReference type="InParanoid" id="P07316"/>
<dbReference type="OMA" id="IHSLNVM"/>
<dbReference type="OrthoDB" id="8407241at2759"/>
<dbReference type="PAN-GO" id="P07316">
    <property type="GO annotations" value="3 GO annotations based on evolutionary models"/>
</dbReference>
<dbReference type="PhylomeDB" id="P07316"/>
<dbReference type="PathwayCommons" id="P07316"/>
<dbReference type="SignaLink" id="P07316"/>
<dbReference type="BioGRID-ORCS" id="1419">
    <property type="hits" value="20 hits in 1141 CRISPR screens"/>
</dbReference>
<dbReference type="EvolutionaryTrace" id="P07316"/>
<dbReference type="GeneWiki" id="CRYGB"/>
<dbReference type="GenomeRNAi" id="1419"/>
<dbReference type="Pharos" id="P07316">
    <property type="development level" value="Tbio"/>
</dbReference>
<dbReference type="PRO" id="PR:P07316"/>
<dbReference type="Proteomes" id="UP000005640">
    <property type="component" value="Chromosome 2"/>
</dbReference>
<dbReference type="RNAct" id="P07316">
    <property type="molecule type" value="protein"/>
</dbReference>
<dbReference type="Bgee" id="ENSG00000182187">
    <property type="expression patterns" value="Expressed in male germ line stem cell (sensu Vertebrata) in testis and 21 other cell types or tissues"/>
</dbReference>
<dbReference type="GO" id="GO:0005737">
    <property type="term" value="C:cytoplasm"/>
    <property type="evidence" value="ECO:0007669"/>
    <property type="project" value="Ensembl"/>
</dbReference>
<dbReference type="GO" id="GO:0005634">
    <property type="term" value="C:nucleus"/>
    <property type="evidence" value="ECO:0007669"/>
    <property type="project" value="Ensembl"/>
</dbReference>
<dbReference type="GO" id="GO:0005212">
    <property type="term" value="F:structural constituent of eye lens"/>
    <property type="evidence" value="ECO:0000318"/>
    <property type="project" value="GO_Central"/>
</dbReference>
<dbReference type="GO" id="GO:0002088">
    <property type="term" value="P:lens development in camera-type eye"/>
    <property type="evidence" value="ECO:0000318"/>
    <property type="project" value="GO_Central"/>
</dbReference>
<dbReference type="GO" id="GO:0070309">
    <property type="term" value="P:lens fiber cell morphogenesis"/>
    <property type="evidence" value="ECO:0007669"/>
    <property type="project" value="Ensembl"/>
</dbReference>
<dbReference type="GO" id="GO:0007601">
    <property type="term" value="P:visual perception"/>
    <property type="evidence" value="ECO:0000318"/>
    <property type="project" value="GO_Central"/>
</dbReference>
<dbReference type="FunFam" id="2.60.20.10:FF:000001">
    <property type="entry name" value="Crystallin gamma S"/>
    <property type="match status" value="1"/>
</dbReference>
<dbReference type="FunFam" id="2.60.20.10:FF:000003">
    <property type="entry name" value="Crystallin gamma S"/>
    <property type="match status" value="1"/>
</dbReference>
<dbReference type="Gene3D" id="2.60.20.10">
    <property type="entry name" value="Crystallins"/>
    <property type="match status" value="2"/>
</dbReference>
<dbReference type="InterPro" id="IPR050252">
    <property type="entry name" value="Beta/Gamma-Crystallin"/>
</dbReference>
<dbReference type="InterPro" id="IPR001064">
    <property type="entry name" value="Beta/gamma_crystallin"/>
</dbReference>
<dbReference type="InterPro" id="IPR011024">
    <property type="entry name" value="G_crystallin-like"/>
</dbReference>
<dbReference type="PANTHER" id="PTHR11818">
    <property type="entry name" value="BETA/GAMMA CRYSTALLIN"/>
    <property type="match status" value="1"/>
</dbReference>
<dbReference type="PANTHER" id="PTHR11818:SF101">
    <property type="entry name" value="GAMMA-CRYSTALLIN B"/>
    <property type="match status" value="1"/>
</dbReference>
<dbReference type="Pfam" id="PF00030">
    <property type="entry name" value="Crystall"/>
    <property type="match status" value="2"/>
</dbReference>
<dbReference type="PRINTS" id="PR01367">
    <property type="entry name" value="BGCRYSTALLIN"/>
</dbReference>
<dbReference type="SMART" id="SM00247">
    <property type="entry name" value="XTALbg"/>
    <property type="match status" value="2"/>
</dbReference>
<dbReference type="SUPFAM" id="SSF49695">
    <property type="entry name" value="gamma-Crystallin-like"/>
    <property type="match status" value="1"/>
</dbReference>
<dbReference type="PROSITE" id="PS50915">
    <property type="entry name" value="CRYSTALLIN_BETA_GAMMA"/>
    <property type="match status" value="4"/>
</dbReference>
<comment type="function">
    <text>Crystallins are the dominant structural components of the vertebrate eye lens.</text>
</comment>
<comment type="subunit">
    <text evidence="1">Monomer.</text>
</comment>
<comment type="interaction">
    <interactant intactId="EBI-21835066">
        <id>P07316</id>
    </interactant>
    <interactant intactId="EBI-6875941">
        <id>P07315</id>
        <label>CRYGC</label>
    </interactant>
    <organismsDiffer>false</organismsDiffer>
    <experiments>2</experiments>
</comment>
<comment type="domain">
    <text>Has a two-domain beta-structure, folded into four very similar Greek key motifs.</text>
</comment>
<comment type="disease" evidence="6">
    <disease id="DI-03806">
        <name>Cataract 39, multiple types</name>
        <acronym>CTRCT39</acronym>
        <description>An opacification of the crystalline lens of the eye that frequently results in visual impairment or blindness. Opacities vary in morphology, are often confined to a portion of the lens, and may be static or progressive. In general, the more posteriorly located and dense an opacity, the greater the impact on visual function. CTRCT39 includes lamellar, anterior polar, and complete cataracts.</description>
        <dbReference type="MIM" id="615188"/>
    </disease>
    <text>The disease is caused by variants affecting the gene represented in this entry.</text>
</comment>
<comment type="similarity">
    <text evidence="9">Belongs to the beta/gamma-crystallin family.</text>
</comment>
<proteinExistence type="evidence at protein level"/>
<keyword id="KW-0002">3D-structure</keyword>
<keyword id="KW-0898">Cataract</keyword>
<keyword id="KW-0273">Eye lens protein</keyword>
<keyword id="KW-1267">Proteomics identification</keyword>
<keyword id="KW-1185">Reference proteome</keyword>
<keyword id="KW-0677">Repeat</keyword>
<name>CRGB_HUMAN</name>
<organism>
    <name type="scientific">Homo sapiens</name>
    <name type="common">Human</name>
    <dbReference type="NCBI Taxonomy" id="9606"/>
    <lineage>
        <taxon>Eukaryota</taxon>
        <taxon>Metazoa</taxon>
        <taxon>Chordata</taxon>
        <taxon>Craniata</taxon>
        <taxon>Vertebrata</taxon>
        <taxon>Euteleostomi</taxon>
        <taxon>Mammalia</taxon>
        <taxon>Eutheria</taxon>
        <taxon>Euarchontoglires</taxon>
        <taxon>Primates</taxon>
        <taxon>Haplorrhini</taxon>
        <taxon>Catarrhini</taxon>
        <taxon>Hominidae</taxon>
        <taxon>Homo</taxon>
    </lineage>
</organism>
<evidence type="ECO:0000250" key="1"/>
<evidence type="ECO:0000255" key="2">
    <source>
        <dbReference type="PROSITE-ProRule" id="PRU00028"/>
    </source>
</evidence>
<evidence type="ECO:0000269" key="3">
    <source>
    </source>
</evidence>
<evidence type="ECO:0000269" key="4">
    <source>
    </source>
</evidence>
<evidence type="ECO:0000269" key="5">
    <source>
    </source>
</evidence>
<evidence type="ECO:0000269" key="6">
    <source>
    </source>
</evidence>
<evidence type="ECO:0000269" key="7">
    <source>
    </source>
</evidence>
<evidence type="ECO:0000269" key="8">
    <source>
    </source>
</evidence>
<evidence type="ECO:0000305" key="9"/>
<evidence type="ECO:0007829" key="10">
    <source>
        <dbReference type="PDB" id="2JDF"/>
    </source>
</evidence>
<reference key="1">
    <citation type="journal article" date="1985" name="Gene">
        <title>Two human gamma-crystallin genes are linked and riddled with Alu-repeats.</title>
        <authorList>
            <person name="den Dunnen J.T."/>
            <person name="Moormann R.J.M."/>
            <person name="Cremers F.P.M."/>
            <person name="Schoenmakers J.G.G."/>
        </authorList>
    </citation>
    <scope>NUCLEOTIDE SEQUENCE [GENOMIC DNA]</scope>
    <scope>VARIANT LEU-111</scope>
</reference>
<reference key="2">
    <citation type="journal article" date="1989" name="Gene">
        <title>Nucleotide sequence of the rat gamma-crystallin gene region and comparison with an orthologous human region.</title>
        <authorList>
            <person name="den Dunnen J.T."/>
            <person name="van Neck J.W."/>
            <person name="Cremers F.P.M."/>
            <person name="Lubsen N.H."/>
            <person name="Schoenmakers J.G.G."/>
        </authorList>
    </citation>
    <scope>NUCLEOTIDE SEQUENCE [GENOMIC DNA]</scope>
    <scope>VARIANT LEU-111</scope>
</reference>
<reference key="3">
    <citation type="journal article" date="2005" name="Nature">
        <title>Generation and annotation of the DNA sequences of human chromosomes 2 and 4.</title>
        <authorList>
            <person name="Hillier L.W."/>
            <person name="Graves T.A."/>
            <person name="Fulton R.S."/>
            <person name="Fulton L.A."/>
            <person name="Pepin K.H."/>
            <person name="Minx P."/>
            <person name="Wagner-McPherson C."/>
            <person name="Layman D."/>
            <person name="Wylie K."/>
            <person name="Sekhon M."/>
            <person name="Becker M.C."/>
            <person name="Fewell G.A."/>
            <person name="Delehaunty K.D."/>
            <person name="Miner T.L."/>
            <person name="Nash W.E."/>
            <person name="Kremitzki C."/>
            <person name="Oddy L."/>
            <person name="Du H."/>
            <person name="Sun H."/>
            <person name="Bradshaw-Cordum H."/>
            <person name="Ali J."/>
            <person name="Carter J."/>
            <person name="Cordes M."/>
            <person name="Harris A."/>
            <person name="Isak A."/>
            <person name="van Brunt A."/>
            <person name="Nguyen C."/>
            <person name="Du F."/>
            <person name="Courtney L."/>
            <person name="Kalicki J."/>
            <person name="Ozersky P."/>
            <person name="Abbott S."/>
            <person name="Armstrong J."/>
            <person name="Belter E.A."/>
            <person name="Caruso L."/>
            <person name="Cedroni M."/>
            <person name="Cotton M."/>
            <person name="Davidson T."/>
            <person name="Desai A."/>
            <person name="Elliott G."/>
            <person name="Erb T."/>
            <person name="Fronick C."/>
            <person name="Gaige T."/>
            <person name="Haakenson W."/>
            <person name="Haglund K."/>
            <person name="Holmes A."/>
            <person name="Harkins R."/>
            <person name="Kim K."/>
            <person name="Kruchowski S.S."/>
            <person name="Strong C.M."/>
            <person name="Grewal N."/>
            <person name="Goyea E."/>
            <person name="Hou S."/>
            <person name="Levy A."/>
            <person name="Martinka S."/>
            <person name="Mead K."/>
            <person name="McLellan M.D."/>
            <person name="Meyer R."/>
            <person name="Randall-Maher J."/>
            <person name="Tomlinson C."/>
            <person name="Dauphin-Kohlberg S."/>
            <person name="Kozlowicz-Reilly A."/>
            <person name="Shah N."/>
            <person name="Swearengen-Shahid S."/>
            <person name="Snider J."/>
            <person name="Strong J.T."/>
            <person name="Thompson J."/>
            <person name="Yoakum M."/>
            <person name="Leonard S."/>
            <person name="Pearman C."/>
            <person name="Trani L."/>
            <person name="Radionenko M."/>
            <person name="Waligorski J.E."/>
            <person name="Wang C."/>
            <person name="Rock S.M."/>
            <person name="Tin-Wollam A.-M."/>
            <person name="Maupin R."/>
            <person name="Latreille P."/>
            <person name="Wendl M.C."/>
            <person name="Yang S.-P."/>
            <person name="Pohl C."/>
            <person name="Wallis J.W."/>
            <person name="Spieth J."/>
            <person name="Bieri T.A."/>
            <person name="Berkowicz N."/>
            <person name="Nelson J.O."/>
            <person name="Osborne J."/>
            <person name="Ding L."/>
            <person name="Meyer R."/>
            <person name="Sabo A."/>
            <person name="Shotland Y."/>
            <person name="Sinha P."/>
            <person name="Wohldmann P.E."/>
            <person name="Cook L.L."/>
            <person name="Hickenbotham M.T."/>
            <person name="Eldred J."/>
            <person name="Williams D."/>
            <person name="Jones T.A."/>
            <person name="She X."/>
            <person name="Ciccarelli F.D."/>
            <person name="Izaurralde E."/>
            <person name="Taylor J."/>
            <person name="Schmutz J."/>
            <person name="Myers R.M."/>
            <person name="Cox D.R."/>
            <person name="Huang X."/>
            <person name="McPherson J.D."/>
            <person name="Mardis E.R."/>
            <person name="Clifton S.W."/>
            <person name="Warren W.C."/>
            <person name="Chinwalla A.T."/>
            <person name="Eddy S.R."/>
            <person name="Marra M.A."/>
            <person name="Ovcharenko I."/>
            <person name="Furey T.S."/>
            <person name="Miller W."/>
            <person name="Eichler E.E."/>
            <person name="Bork P."/>
            <person name="Suyama M."/>
            <person name="Torrents D."/>
            <person name="Waterston R.H."/>
            <person name="Wilson R.K."/>
        </authorList>
    </citation>
    <scope>NUCLEOTIDE SEQUENCE [LARGE SCALE GENOMIC DNA]</scope>
</reference>
<reference key="4">
    <citation type="journal article" date="2004" name="Genome Res.">
        <title>The status, quality, and expansion of the NIH full-length cDNA project: the Mammalian Gene Collection (MGC).</title>
        <authorList>
            <consortium name="The MGC Project Team"/>
        </authorList>
    </citation>
    <scope>NUCLEOTIDE SEQUENCE [LARGE SCALE MRNA]</scope>
    <scope>VARIANT LEU-111</scope>
    <source>
        <tissue>Testis</tissue>
    </source>
</reference>
<reference key="5">
    <citation type="journal article" date="2012" name="Mol. Vis.">
        <title>Novel crystallin gamma B mutations in a Kuwaiti family with autosomal dominant congenital cataracts reveal genetic and clinical heterogeneity.</title>
        <authorList>
            <person name="Al Fadhli S."/>
            <person name="Abdelmoaty S."/>
            <person name="Al-Hajeri A."/>
            <person name="Behbehani A."/>
            <person name="Alkuraya F."/>
        </authorList>
    </citation>
    <scope>INVOLVEMENT IN CTRCT39</scope>
</reference>
<reference key="6">
    <citation type="journal article" date="2003" name="Biochem. Biophys. Res. Commun.">
        <title>Homology models of human gamma-crystallins: structural study of the extensive charge network in gamma-crystallins.</title>
        <authorList>
            <person name="Salim A."/>
            <person name="Zaidi Z.H."/>
        </authorList>
    </citation>
    <scope>3D-STRUCTURE MODELING</scope>
</reference>
<reference key="7">
    <citation type="journal article" date="2003" name="Proteins">
        <title>Prediction of possible sites for posttranslational modifications in human gamma crystallins: effect of glycation on the structure of human gamma-B-crystallin as analyzed by molecular modeling.</title>
        <authorList>
            <person name="Salim A."/>
            <person name="Bano A."/>
            <person name="Zaidi Z.H."/>
        </authorList>
    </citation>
    <scope>3D-STRUCTURE MODELING</scope>
</reference>
<reference key="8">
    <citation type="journal article" date="2007" name="J. Mol. Biol.">
        <title>Affilin-novel binding molecules based on human gamma-B-crystallin, an all beta-sheet protein.</title>
        <authorList>
            <person name="Ebersbach H."/>
            <person name="Fiedler E."/>
            <person name="Scheuermann T."/>
            <person name="Fiedler M."/>
            <person name="Stubbs M.T."/>
            <person name="Reimann C."/>
            <person name="Proetzel G."/>
            <person name="Rudolph R."/>
            <person name="Fiedler U."/>
        </authorList>
    </citation>
    <scope>X-RAY CRYSTALLOGRAPHY (1.7 ANGSTROMS) OF 2-174</scope>
</reference>
<reference key="9">
    <citation type="journal article" date="2002" name="J. Med. Genet.">
        <title>Novel mutations in the gamma-crystallin genes cause autosomal dominant congenital cataracts.</title>
        <authorList>
            <person name="Santhiya S.T."/>
            <person name="Shyam Manohar M."/>
            <person name="Rawlley D."/>
            <person name="Vijayalakshmi P."/>
            <person name="Namperumalsamy P."/>
            <person name="Gopinath P.M."/>
            <person name="Loester J."/>
            <person name="Graw J."/>
        </authorList>
    </citation>
    <scope>VARIANTS ILE-73 AND LEU-111</scope>
</reference>
<reference key="10">
    <citation type="journal article" date="2003" name="J. Med. Genet.">
        <title>Gamma-D crystallin gene (CRYGD) mutation causes autosomal dominant congenital cerulean cataracts.</title>
        <authorList>
            <person name="Nandrot E."/>
            <person name="Slingsby C."/>
            <person name="Basak A."/>
            <person name="Cherif-Chefchaouni M."/>
            <person name="Benazzouz B."/>
            <person name="Hajaji Y."/>
            <person name="Boutayeb S."/>
            <person name="Gribouval O."/>
            <person name="Arbogast L."/>
            <person name="Berraho A."/>
            <person name="Abitbol M."/>
            <person name="Hilal L."/>
        </authorList>
    </citation>
    <scope>VARIANT LEU-111</scope>
</reference>
<gene>
    <name type="primary">CRYGB</name>
    <name type="synonym">CRYG2</name>
</gene>
<feature type="chain" id="PRO_0000057586" description="Gamma-crystallin B">
    <location>
        <begin position="1"/>
        <end position="175"/>
    </location>
</feature>
<feature type="domain" description="Beta/gamma crystallin 'Greek key' 1" evidence="2">
    <location>
        <begin position="2"/>
        <end position="40"/>
    </location>
</feature>
<feature type="domain" description="Beta/gamma crystallin 'Greek key' 2" evidence="2">
    <location>
        <begin position="41"/>
        <end position="83"/>
    </location>
</feature>
<feature type="domain" description="Beta/gamma crystallin 'Greek key' 3" evidence="2">
    <location>
        <begin position="89"/>
        <end position="129"/>
    </location>
</feature>
<feature type="domain" description="Beta/gamma crystallin 'Greek key' 4" evidence="2">
    <location>
        <begin position="130"/>
        <end position="172"/>
    </location>
</feature>
<feature type="region of interest" description="Connecting peptide">
    <location>
        <begin position="84"/>
        <end position="88"/>
    </location>
</feature>
<feature type="sequence variant" id="VAR_021140" evidence="3">
    <original>S</original>
    <variation>I</variation>
    <location>
        <position position="73"/>
    </location>
</feature>
<feature type="sequence variant" id="VAR_029517" description="In dbSNP:rs2241980.">
    <original>R</original>
    <variation>T</variation>
    <location>
        <position position="90"/>
    </location>
</feature>
<feature type="sequence variant" id="VAR_021141" description="In dbSNP:rs796287." evidence="3 4 5 7 8">
    <original>I</original>
    <variation>L</variation>
    <location>
        <position position="111"/>
    </location>
</feature>
<feature type="strand" evidence="10">
    <location>
        <begin position="3"/>
        <end position="9"/>
    </location>
</feature>
<feature type="turn" evidence="10">
    <location>
        <begin position="10"/>
        <end position="12"/>
    </location>
</feature>
<feature type="strand" evidence="10">
    <location>
        <begin position="13"/>
        <end position="21"/>
    </location>
</feature>
<feature type="turn" evidence="10">
    <location>
        <begin position="27"/>
        <end position="29"/>
    </location>
</feature>
<feature type="strand" evidence="10">
    <location>
        <begin position="34"/>
        <end position="48"/>
    </location>
</feature>
<feature type="turn" evidence="10">
    <location>
        <begin position="49"/>
        <end position="51"/>
    </location>
</feature>
<feature type="strand" evidence="10">
    <location>
        <begin position="52"/>
        <end position="58"/>
    </location>
</feature>
<feature type="strand" evidence="10">
    <location>
        <begin position="60"/>
        <end position="65"/>
    </location>
</feature>
<feature type="helix" evidence="10">
    <location>
        <begin position="66"/>
        <end position="69"/>
    </location>
</feature>
<feature type="strand" evidence="10">
    <location>
        <begin position="72"/>
        <end position="74"/>
    </location>
</feature>
<feature type="strand" evidence="10">
    <location>
        <begin position="78"/>
        <end position="82"/>
    </location>
</feature>
<feature type="strand" evidence="10">
    <location>
        <begin position="90"/>
        <end position="96"/>
    </location>
</feature>
<feature type="turn" evidence="10">
    <location>
        <begin position="97"/>
        <end position="99"/>
    </location>
</feature>
<feature type="strand" evidence="10">
    <location>
        <begin position="100"/>
        <end position="108"/>
    </location>
</feature>
<feature type="helix" evidence="10">
    <location>
        <begin position="113"/>
        <end position="117"/>
    </location>
</feature>
<feature type="strand" evidence="10">
    <location>
        <begin position="124"/>
        <end position="130"/>
    </location>
</feature>
<feature type="strand" evidence="10">
    <location>
        <begin position="132"/>
        <end position="137"/>
    </location>
</feature>
<feature type="turn" evidence="10">
    <location>
        <begin position="138"/>
        <end position="140"/>
    </location>
</feature>
<feature type="strand" evidence="10">
    <location>
        <begin position="141"/>
        <end position="147"/>
    </location>
</feature>
<feature type="strand" evidence="10">
    <location>
        <begin position="149"/>
        <end position="152"/>
    </location>
</feature>
<feature type="helix" evidence="10">
    <location>
        <begin position="155"/>
        <end position="158"/>
    </location>
</feature>
<feature type="strand" evidence="10">
    <location>
        <begin position="161"/>
        <end position="164"/>
    </location>
</feature>
<feature type="strand" evidence="10">
    <location>
        <begin position="167"/>
        <end position="170"/>
    </location>
</feature>
<accession>P07316</accession>
<accession>Q17RB5</accession>
<accession>Q53ST2</accession>